<feature type="signal peptide" evidence="3">
    <location>
        <begin position="1"/>
        <end position="18"/>
    </location>
</feature>
<feature type="chain" id="PRO_0000273570" description="L-amino-acid oxidase">
    <location>
        <begin position="19"/>
        <end position="505"/>
    </location>
</feature>
<feature type="binding site" evidence="2">
    <location>
        <begin position="61"/>
        <end position="62"/>
    </location>
    <ligand>
        <name>FAD</name>
        <dbReference type="ChEBI" id="CHEBI:57692"/>
    </ligand>
</feature>
<feature type="binding site" evidence="2">
    <location>
        <begin position="81"/>
        <end position="82"/>
    </location>
    <ligand>
        <name>FAD</name>
        <dbReference type="ChEBI" id="CHEBI:57692"/>
    </ligand>
</feature>
<feature type="binding site" evidence="2">
    <location>
        <position position="89"/>
    </location>
    <ligand>
        <name>FAD</name>
        <dbReference type="ChEBI" id="CHEBI:57692"/>
    </ligand>
</feature>
<feature type="binding site" evidence="2">
    <location>
        <begin position="105"/>
        <end position="108"/>
    </location>
    <ligand>
        <name>FAD</name>
        <dbReference type="ChEBI" id="CHEBI:57692"/>
    </ligand>
</feature>
<feature type="binding site" evidence="2">
    <location>
        <position position="108"/>
    </location>
    <ligand>
        <name>substrate</name>
    </ligand>
</feature>
<feature type="binding site" evidence="2">
    <location>
        <position position="241"/>
    </location>
    <ligand>
        <name>substrate</name>
    </ligand>
</feature>
<feature type="binding site" evidence="2">
    <location>
        <position position="279"/>
    </location>
    <ligand>
        <name>FAD</name>
        <dbReference type="ChEBI" id="CHEBI:57692"/>
    </ligand>
</feature>
<feature type="binding site" evidence="2">
    <location>
        <position position="390"/>
    </location>
    <ligand>
        <name>substrate</name>
    </ligand>
</feature>
<feature type="binding site" evidence="2">
    <location>
        <position position="475"/>
    </location>
    <ligand>
        <name>FAD</name>
        <dbReference type="ChEBI" id="CHEBI:57692"/>
    </ligand>
</feature>
<feature type="binding site" evidence="2">
    <location>
        <begin position="482"/>
        <end position="487"/>
    </location>
    <ligand>
        <name>FAD</name>
        <dbReference type="ChEBI" id="CHEBI:57692"/>
    </ligand>
</feature>
<feature type="binding site" evidence="2">
    <location>
        <begin position="482"/>
        <end position="483"/>
    </location>
    <ligand>
        <name>substrate</name>
    </ligand>
</feature>
<feature type="glycosylation site" description="N-linked (GlcNAc...) asparagine" evidence="3">
    <location>
        <position position="190"/>
    </location>
</feature>
<feature type="glycosylation site" description="N-linked (GlcNAc...) asparagine" evidence="3">
    <location>
        <position position="379"/>
    </location>
</feature>
<feature type="disulfide bond" evidence="2">
    <location>
        <begin position="28"/>
        <end position="191"/>
    </location>
</feature>
<feature type="disulfide bond" evidence="2">
    <location>
        <begin position="349"/>
        <end position="430"/>
    </location>
</feature>
<feature type="sequence conflict" description="In Ref. 3; AA sequence." evidence="8" ref="3">
    <original>D</original>
    <variation>H</variation>
    <location>
        <position position="20"/>
    </location>
</feature>
<feature type="sequence conflict" description="In Ref. 3; AA sequence." evidence="8" ref="3">
    <original>C</original>
    <variation>Y</variation>
    <location>
        <position position="28"/>
    </location>
</feature>
<proteinExistence type="evidence at protein level"/>
<protein>
    <recommendedName>
        <fullName>L-amino-acid oxidase</fullName>
        <shortName evidence="6">LAAO</shortName>
        <shortName evidence="7">LAO</shortName>
        <ecNumber evidence="4">1.4.3.2</ecNumber>
    </recommendedName>
    <alternativeName>
        <fullName evidence="7">Apoxin I-like protein</fullName>
    </alternativeName>
    <alternativeName>
        <fullName evidence="6">Okinawa Habu apoxin protein-1</fullName>
        <shortName evidence="6">OHAP-1</shortName>
    </alternativeName>
</protein>
<comment type="function">
    <text evidence="1 4 5">Catalyzes an oxidative deamination of predominantly hydrophobic and aromatic L-amino acids, thus producing hydrogen peroxide that may contribute to the diverse toxic effects of this enzyme (PubMed:12650671, PubMed:9781840). Shows activity on L-Leu (PubMed:12650671, PubMed:9781840). Exhibits diverse biological activities, such as hemorrhage, edema, antibacterial and antiparasitic activities, as well as regulation of platelet aggregation. Effects of snake L-amino oxidases on platelets are controversial, since they either induce aggregation or inhibit agonist-induced aggregation. These different effects are probably due to different experimental conditions (By similarity). This protein has an ability to induce hemolysis and apoptosis.</text>
</comment>
<comment type="catalytic activity">
    <reaction evidence="4 5">
        <text>an L-alpha-amino acid + O2 + H2O = a 2-oxocarboxylate + H2O2 + NH4(+)</text>
        <dbReference type="Rhea" id="RHEA:13781"/>
        <dbReference type="ChEBI" id="CHEBI:15377"/>
        <dbReference type="ChEBI" id="CHEBI:15379"/>
        <dbReference type="ChEBI" id="CHEBI:16240"/>
        <dbReference type="ChEBI" id="CHEBI:28938"/>
        <dbReference type="ChEBI" id="CHEBI:35179"/>
        <dbReference type="ChEBI" id="CHEBI:59869"/>
        <dbReference type="EC" id="1.4.3.2"/>
    </reaction>
</comment>
<comment type="catalytic activity">
    <reaction evidence="4 5">
        <text>L-leucine + O2 + H2O = 4-methyl-2-oxopentanoate + H2O2 + NH4(+)</text>
        <dbReference type="Rhea" id="RHEA:60996"/>
        <dbReference type="ChEBI" id="CHEBI:15377"/>
        <dbReference type="ChEBI" id="CHEBI:15379"/>
        <dbReference type="ChEBI" id="CHEBI:16240"/>
        <dbReference type="ChEBI" id="CHEBI:17865"/>
        <dbReference type="ChEBI" id="CHEBI:28938"/>
        <dbReference type="ChEBI" id="CHEBI:57427"/>
    </reaction>
</comment>
<comment type="cofactor">
    <cofactor evidence="2">
        <name>FAD</name>
        <dbReference type="ChEBI" id="CHEBI:57692"/>
    </cofactor>
</comment>
<comment type="subunit">
    <text evidence="5">Monomer. This is in contrast with most of its orthologs, that are non-covalently linked homodimers.</text>
</comment>
<comment type="subcellular location">
    <subcellularLocation>
        <location evidence="5">Secreted</location>
    </subcellularLocation>
</comment>
<comment type="tissue specificity">
    <text evidence="9">Expressed by the venom gland.</text>
</comment>
<comment type="PTM">
    <text evidence="2">N-glycosylated.</text>
</comment>
<comment type="similarity">
    <text evidence="8">Belongs to the flavin monoamine oxidase family. FIG1 subfamily.</text>
</comment>
<organism>
    <name type="scientific">Protobothrops flavoviridis</name>
    <name type="common">Habu</name>
    <name type="synonym">Trimeresurus flavoviridis</name>
    <dbReference type="NCBI Taxonomy" id="88087"/>
    <lineage>
        <taxon>Eukaryota</taxon>
        <taxon>Metazoa</taxon>
        <taxon>Chordata</taxon>
        <taxon>Craniata</taxon>
        <taxon>Vertebrata</taxon>
        <taxon>Euteleostomi</taxon>
        <taxon>Lepidosauria</taxon>
        <taxon>Squamata</taxon>
        <taxon>Bifurcata</taxon>
        <taxon>Unidentata</taxon>
        <taxon>Episquamata</taxon>
        <taxon>Toxicofera</taxon>
        <taxon>Serpentes</taxon>
        <taxon>Colubroidea</taxon>
        <taxon>Viperidae</taxon>
        <taxon>Crotalinae</taxon>
        <taxon>Protobothrops</taxon>
    </lineage>
</organism>
<name>OXLA_PROFL</name>
<accession>P0C2D5</accession>
<accession>T2HRS5</accession>
<reference evidence="10 11" key="1">
    <citation type="journal article" date="2013" name="BMC Genomics">
        <title>Quantitative high-throughput profiling of snake venom gland transcriptomes and proteomes (Ovophis okinavensis and Protobothrops flavoviridis).</title>
        <authorList>
            <person name="Aird S.D."/>
            <person name="Watanabe Y."/>
            <person name="Villar-Briones A."/>
            <person name="Roy M.C."/>
            <person name="Terada K."/>
            <person name="Mikheyev A.S."/>
        </authorList>
    </citation>
    <scope>NUCLEOTIDE SEQUENCE [MRNA]</scope>
    <source>
        <tissue>Venom gland</tissue>
    </source>
</reference>
<reference key="2">
    <citation type="journal article" date="2003" name="Toxicol. in Vitro">
        <title>Apoptotic effect in the glioma cells induced by specific protein extracted from Okinawa Habu (Trimeresurus flavoviridis) venom in relation to oxidative stress.</title>
        <authorList>
            <person name="Sun L.-K."/>
            <person name="Yoshii Y."/>
            <person name="Hyodo A."/>
            <person name="Tsurushima H."/>
            <person name="Saito A."/>
            <person name="Harakuni T."/>
            <person name="Li Y.-P."/>
            <person name="Kariya K."/>
            <person name="Nozaki M."/>
            <person name="Morine N."/>
        </authorList>
    </citation>
    <scope>PROTEIN SEQUENCE OF 19-48</scope>
    <scope>FUNCTION</scope>
    <scope>CATALYTIC ACTIVITY</scope>
    <source>
        <tissue>Venom</tissue>
    </source>
</reference>
<reference key="3">
    <citation type="journal article" date="1998" name="Biol. Pharm. Bull.">
        <title>Characterization of an apoptosis-inducing factor in Habu snake venom as a glycyrrhizin (GL)-binding protein potently inhibited by GL in vitro.</title>
        <authorList>
            <person name="Abe Y."/>
            <person name="Shimoyama Y."/>
            <person name="Munakata H."/>
            <person name="Ito J."/>
            <person name="Nagata N."/>
            <person name="Ohtsuki K."/>
        </authorList>
    </citation>
    <scope>PROTEIN SEQUENCE OF 19-38</scope>
    <scope>FUNCTION</scope>
    <scope>CATALYTIC ACTIVITY</scope>
    <scope>SUBUNIT</scope>
    <scope>SUBCELLULAR LOCATION</scope>
    <source>
        <tissue>Venom</tissue>
    </source>
</reference>
<dbReference type="EC" id="1.4.3.2" evidence="4"/>
<dbReference type="EMBL" id="AB848142">
    <property type="protein sequence ID" value="BAN82013.1"/>
    <property type="molecule type" value="mRNA"/>
</dbReference>
<dbReference type="EMBL" id="AB985225">
    <property type="protein sequence ID" value="BAP39950.1"/>
    <property type="molecule type" value="mRNA"/>
</dbReference>
<dbReference type="SMR" id="P0C2D5"/>
<dbReference type="GO" id="GO:0005576">
    <property type="term" value="C:extracellular region"/>
    <property type="evidence" value="ECO:0007669"/>
    <property type="project" value="UniProtKB-KW"/>
</dbReference>
<dbReference type="GO" id="GO:0001716">
    <property type="term" value="F:L-amino-acid oxidase activity"/>
    <property type="evidence" value="ECO:0007669"/>
    <property type="project" value="UniProtKB-EC"/>
</dbReference>
<dbReference type="GO" id="GO:0090729">
    <property type="term" value="F:toxin activity"/>
    <property type="evidence" value="ECO:0007669"/>
    <property type="project" value="UniProtKB-KW"/>
</dbReference>
<dbReference type="GO" id="GO:0009063">
    <property type="term" value="P:amino acid catabolic process"/>
    <property type="evidence" value="ECO:0007669"/>
    <property type="project" value="TreeGrafter"/>
</dbReference>
<dbReference type="GO" id="GO:0006915">
    <property type="term" value="P:apoptotic process"/>
    <property type="evidence" value="ECO:0007669"/>
    <property type="project" value="UniProtKB-KW"/>
</dbReference>
<dbReference type="GO" id="GO:0042742">
    <property type="term" value="P:defense response to bacterium"/>
    <property type="evidence" value="ECO:0007669"/>
    <property type="project" value="UniProtKB-KW"/>
</dbReference>
<dbReference type="GO" id="GO:0031640">
    <property type="term" value="P:killing of cells of another organism"/>
    <property type="evidence" value="ECO:0007669"/>
    <property type="project" value="UniProtKB-KW"/>
</dbReference>
<dbReference type="FunFam" id="1.10.405.10:FF:000004">
    <property type="entry name" value="Amine oxidase"/>
    <property type="match status" value="1"/>
</dbReference>
<dbReference type="FunFam" id="3.50.50.60:FF:000450">
    <property type="entry name" value="Amine oxidase"/>
    <property type="match status" value="1"/>
</dbReference>
<dbReference type="FunFam" id="3.50.50.60:FF:001010">
    <property type="entry name" value="L-amino-acid oxidase"/>
    <property type="match status" value="1"/>
</dbReference>
<dbReference type="Gene3D" id="3.90.660.10">
    <property type="match status" value="1"/>
</dbReference>
<dbReference type="Gene3D" id="3.50.50.60">
    <property type="entry name" value="FAD/NAD(P)-binding domain"/>
    <property type="match status" value="1"/>
</dbReference>
<dbReference type="Gene3D" id="1.10.405.10">
    <property type="entry name" value="Guanine Nucleotide Dissociation Inhibitor, domain 1"/>
    <property type="match status" value="1"/>
</dbReference>
<dbReference type="InterPro" id="IPR002937">
    <property type="entry name" value="Amino_oxidase"/>
</dbReference>
<dbReference type="InterPro" id="IPR036188">
    <property type="entry name" value="FAD/NAD-bd_sf"/>
</dbReference>
<dbReference type="InterPro" id="IPR001613">
    <property type="entry name" value="Flavin_amine_oxidase"/>
</dbReference>
<dbReference type="InterPro" id="IPR050281">
    <property type="entry name" value="Flavin_monoamine_oxidase"/>
</dbReference>
<dbReference type="PANTHER" id="PTHR10742:SF355">
    <property type="entry name" value="AMINE OXIDASE"/>
    <property type="match status" value="1"/>
</dbReference>
<dbReference type="PANTHER" id="PTHR10742">
    <property type="entry name" value="FLAVIN MONOAMINE OXIDASE"/>
    <property type="match status" value="1"/>
</dbReference>
<dbReference type="Pfam" id="PF01593">
    <property type="entry name" value="Amino_oxidase"/>
    <property type="match status" value="1"/>
</dbReference>
<dbReference type="PRINTS" id="PR00757">
    <property type="entry name" value="AMINEOXDASEF"/>
</dbReference>
<dbReference type="SUPFAM" id="SSF54373">
    <property type="entry name" value="FAD-linked reductases, C-terminal domain"/>
    <property type="match status" value="1"/>
</dbReference>
<dbReference type="SUPFAM" id="SSF51905">
    <property type="entry name" value="FAD/NAD(P)-binding domain"/>
    <property type="match status" value="1"/>
</dbReference>
<evidence type="ECO:0000250" key="1">
    <source>
        <dbReference type="UniProtKB" id="P0CC17"/>
    </source>
</evidence>
<evidence type="ECO:0000250" key="2">
    <source>
        <dbReference type="UniProtKB" id="P81382"/>
    </source>
</evidence>
<evidence type="ECO:0000255" key="3"/>
<evidence type="ECO:0000269" key="4">
    <source>
    </source>
</evidence>
<evidence type="ECO:0000269" key="5">
    <source>
    </source>
</evidence>
<evidence type="ECO:0000303" key="6">
    <source>
    </source>
</evidence>
<evidence type="ECO:0000303" key="7">
    <source>
    </source>
</evidence>
<evidence type="ECO:0000305" key="8"/>
<evidence type="ECO:0000305" key="9">
    <source>
    </source>
</evidence>
<evidence type="ECO:0000312" key="10">
    <source>
        <dbReference type="EMBL" id="BAN82013.1"/>
    </source>
</evidence>
<evidence type="ECO:0000312" key="11">
    <source>
        <dbReference type="EMBL" id="BAP39950.1"/>
    </source>
</evidence>
<sequence>MNVFLMFSLLFLAALGSCADDRNPLEECFRETDYEEFLEIARNGLKKTSNPKHVVIVGAGMSGLSAAYVLAGAGHQVTVLEASERAGGRVRTYRNDKEGWYANLGPMRLPEKHRIVREYIRKFGLQLNEFSQENDNAWHFIKNIRKRVGEVKKDPGVLKYPVKPSEEGKSAGQLYEESLRKVEKELKRTNCSYILNKYDTYSTKEYLIKEGNLSPGAVDMIGDLLNEDSGYYVSFIESMKHDDIFAYEKRFDEIVGGMDQLPTSMYQAIEEKVRFNTRVIKIQQNAKKVTVTYQTPAKDTSLVTADYVIVCTTSRAARRINFRPPLPPKKAHALRSVHYRSGTKIFLTCTKKFWEDDGIHGGKSTTDLPSRFIYYPNHNFTSGVGVIIAYGIGDDANFFQALDFKSCADIVMNDLSLIHQLPKKDIQAFCYPSMIQKWSLDKYAMGGITTFTPYQFQHFSEALTAPVGRIFFAGEYTAHAHGWIDSTIKSGLTAARDVNRASENP</sequence>
<keyword id="KW-0044">Antibiotic</keyword>
<keyword id="KW-0929">Antimicrobial</keyword>
<keyword id="KW-0053">Apoptosis</keyword>
<keyword id="KW-0204">Cytolysis</keyword>
<keyword id="KW-0903">Direct protein sequencing</keyword>
<keyword id="KW-1015">Disulfide bond</keyword>
<keyword id="KW-0274">FAD</keyword>
<keyword id="KW-0285">Flavoprotein</keyword>
<keyword id="KW-0325">Glycoprotein</keyword>
<keyword id="KW-0354">Hemolysis</keyword>
<keyword id="KW-1199">Hemostasis impairing toxin</keyword>
<keyword id="KW-0560">Oxidoreductase</keyword>
<keyword id="KW-1201">Platelet aggregation inhibiting toxin</keyword>
<keyword id="KW-0964">Secreted</keyword>
<keyword id="KW-0732">Signal</keyword>
<keyword id="KW-0800">Toxin</keyword>